<protein>
    <recommendedName>
        <fullName>Interleukin-2</fullName>
        <shortName>IL-2</shortName>
    </recommendedName>
    <alternativeName>
        <fullName>T-cell growth factor</fullName>
        <shortName>TCGF</shortName>
    </alternativeName>
</protein>
<accession>Q07885</accession>
<gene>
    <name type="primary">IL2</name>
</gene>
<name>IL2_FELCA</name>
<feature type="signal peptide" evidence="1">
    <location>
        <begin position="1"/>
        <end position="20"/>
    </location>
</feature>
<feature type="chain" id="PRO_0000015481" description="Interleukin-2">
    <location>
        <begin position="21"/>
        <end position="154"/>
    </location>
</feature>
<feature type="glycosylation site" description="N-linked (GlcNAc...) asparagine" evidence="3">
    <location>
        <position position="111"/>
    </location>
</feature>
<feature type="disulfide bond" evidence="1">
    <location>
        <begin position="78"/>
        <end position="126"/>
    </location>
</feature>
<feature type="sequence conflict" description="In Ref. 2; AAA51431." evidence="4" ref="2">
    <original>KI</original>
    <variation>RM</variation>
    <location>
        <begin position="3"/>
        <end position="4"/>
    </location>
</feature>
<feature type="sequence conflict" description="In Ref. 2; AAA51431." evidence="4" ref="2">
    <original>F</original>
    <variation>I</variation>
    <location>
        <position position="150"/>
    </location>
</feature>
<comment type="function">
    <text evidence="2">Cytokine produced by activated CD4-positive helper T-cells and to a lesser extend activated CD8-positive T-cells and natural killer (NK) cells that plays pivotal roles in the immune response and tolerance. Binds to a receptor complex composed of either the high-affinity trimeric IL-2R (IL2RA/CD25, IL2RB/CD122 and IL2RG/CD132) or the low-affinity dimeric IL-2R (IL2RB and IL2RG). Interaction with the receptor leads to oligomerization and conformation changes in the IL-2R subunits resulting in downstream signaling starting with phosphorylation of JAK1 and JAK3. In turn, JAK1 and JAK3 phosphorylate the receptor to form a docking site leading to the phosphorylation of several substrates including STAT5. This process leads to activation of several pathways including STAT, phosphoinositide-3-kinase/PI3K and mitogen-activated protein kinase/MAPK pathways. Functions as a T-cell growth factor and can increase NK-cell cytolytic activity as well. Promotes strong proliferation of activated B-cells and subsequently immunoglobulin production. Plays a pivotal role in regulating the adaptive immune system by controlling the survival and proliferation of regulatory T-cells, which are required for the maintenance of immune tolerance. Moreover, participates in the differentiation and homeostasis of effector T-cell subsets, including Th1, Th2, Th17 as well as memory CD8-positive T-cells.</text>
</comment>
<comment type="subcellular location">
    <subcellularLocation>
        <location>Secreted</location>
    </subcellularLocation>
</comment>
<comment type="similarity">
    <text evidence="4">Belongs to the IL-2 family.</text>
</comment>
<keyword id="KW-1064">Adaptive immunity</keyword>
<keyword id="KW-0202">Cytokine</keyword>
<keyword id="KW-1015">Disulfide bond</keyword>
<keyword id="KW-0325">Glycoprotein</keyword>
<keyword id="KW-0339">Growth factor</keyword>
<keyword id="KW-0391">Immunity</keyword>
<keyword id="KW-1185">Reference proteome</keyword>
<keyword id="KW-0964">Secreted</keyword>
<keyword id="KW-0732">Signal</keyword>
<dbReference type="EMBL" id="L19402">
    <property type="protein sequence ID" value="AAA02865.1"/>
    <property type="molecule type" value="mRNA"/>
</dbReference>
<dbReference type="EMBL" id="L25408">
    <property type="protein sequence ID" value="AAA51431.1"/>
    <property type="molecule type" value="mRNA"/>
</dbReference>
<dbReference type="PIR" id="JN0698">
    <property type="entry name" value="JN0698"/>
</dbReference>
<dbReference type="RefSeq" id="NP_001036802.1">
    <property type="nucleotide sequence ID" value="NM_001043337.1"/>
</dbReference>
<dbReference type="SMR" id="Q07885"/>
<dbReference type="FunCoup" id="Q07885">
    <property type="interactions" value="39"/>
</dbReference>
<dbReference type="STRING" id="9685.ENSFCAP00000012696"/>
<dbReference type="GlyCosmos" id="Q07885">
    <property type="glycosylation" value="1 site, No reported glycans"/>
</dbReference>
<dbReference type="PaxDb" id="9685-ENSFCAP00000012696"/>
<dbReference type="Ensembl" id="ENSFCAT00000013692.4">
    <property type="protein sequence ID" value="ENSFCAP00000012696.1"/>
    <property type="gene ID" value="ENSFCAG00000013688.4"/>
</dbReference>
<dbReference type="Ensembl" id="ENSFCAT00000055869.2">
    <property type="protein sequence ID" value="ENSFCAP00000042708.1"/>
    <property type="gene ID" value="ENSFCAG00000013688.4"/>
</dbReference>
<dbReference type="Ensembl" id="ENSFCAT00000057802.2">
    <property type="protein sequence ID" value="ENSFCAP00000047381.1"/>
    <property type="gene ID" value="ENSFCAG00000013688.4"/>
</dbReference>
<dbReference type="GeneID" id="751114"/>
<dbReference type="KEGG" id="fca:751114"/>
<dbReference type="CTD" id="3558"/>
<dbReference type="VGNC" id="VGNC:78516">
    <property type="gene designation" value="IL2"/>
</dbReference>
<dbReference type="eggNOG" id="ENOG502RVR5">
    <property type="taxonomic scope" value="Eukaryota"/>
</dbReference>
<dbReference type="GeneTree" id="ENSGT00390000003555"/>
<dbReference type="HOGENOM" id="CLU_124210_0_0_1"/>
<dbReference type="InParanoid" id="Q07885"/>
<dbReference type="OMA" id="NGVNNYE"/>
<dbReference type="OrthoDB" id="10268011at2759"/>
<dbReference type="TreeFam" id="TF338200"/>
<dbReference type="Proteomes" id="UP000011712">
    <property type="component" value="Chromosome B1"/>
</dbReference>
<dbReference type="Bgee" id="ENSFCAG00000013688">
    <property type="expression patterns" value="Expressed in spleen"/>
</dbReference>
<dbReference type="GO" id="GO:0005615">
    <property type="term" value="C:extracellular space"/>
    <property type="evidence" value="ECO:0000318"/>
    <property type="project" value="GO_Central"/>
</dbReference>
<dbReference type="GO" id="GO:0005125">
    <property type="term" value="F:cytokine activity"/>
    <property type="evidence" value="ECO:0000318"/>
    <property type="project" value="GO_Central"/>
</dbReference>
<dbReference type="GO" id="GO:0008083">
    <property type="term" value="F:growth factor activity"/>
    <property type="evidence" value="ECO:0007669"/>
    <property type="project" value="UniProtKB-KW"/>
</dbReference>
<dbReference type="GO" id="GO:0005134">
    <property type="term" value="F:interleukin-2 receptor binding"/>
    <property type="evidence" value="ECO:0000318"/>
    <property type="project" value="GO_Central"/>
</dbReference>
<dbReference type="GO" id="GO:0050798">
    <property type="term" value="P:activated T cell proliferation"/>
    <property type="evidence" value="ECO:0007669"/>
    <property type="project" value="Ensembl"/>
</dbReference>
<dbReference type="GO" id="GO:0002250">
    <property type="term" value="P:adaptive immune response"/>
    <property type="evidence" value="ECO:0007669"/>
    <property type="project" value="UniProtKB-KW"/>
</dbReference>
<dbReference type="GO" id="GO:0097696">
    <property type="term" value="P:cell surface receptor signaling pathway via STAT"/>
    <property type="evidence" value="ECO:0007669"/>
    <property type="project" value="Ensembl"/>
</dbReference>
<dbReference type="GO" id="GO:0097192">
    <property type="term" value="P:extrinsic apoptotic signaling pathway in absence of ligand"/>
    <property type="evidence" value="ECO:0007669"/>
    <property type="project" value="Ensembl"/>
</dbReference>
<dbReference type="GO" id="GO:0038110">
    <property type="term" value="P:interleukin-2-mediated signaling pathway"/>
    <property type="evidence" value="ECO:0000318"/>
    <property type="project" value="GO_Central"/>
</dbReference>
<dbReference type="GO" id="GO:0002366">
    <property type="term" value="P:leukocyte activation involved in immune response"/>
    <property type="evidence" value="ECO:0007669"/>
    <property type="project" value="Ensembl"/>
</dbReference>
<dbReference type="GO" id="GO:0002903">
    <property type="term" value="P:negative regulation of B cell apoptotic process"/>
    <property type="evidence" value="ECO:0007669"/>
    <property type="project" value="Ensembl"/>
</dbReference>
<dbReference type="GO" id="GO:0050728">
    <property type="term" value="P:negative regulation of inflammatory response"/>
    <property type="evidence" value="ECO:0007669"/>
    <property type="project" value="Ensembl"/>
</dbReference>
<dbReference type="GO" id="GO:0050672">
    <property type="term" value="P:negative regulation of lymphocyte proliferation"/>
    <property type="evidence" value="ECO:0007669"/>
    <property type="project" value="Ensembl"/>
</dbReference>
<dbReference type="GO" id="GO:2000320">
    <property type="term" value="P:negative regulation of T-helper 17 cell differentiation"/>
    <property type="evidence" value="ECO:0007669"/>
    <property type="project" value="Ensembl"/>
</dbReference>
<dbReference type="GO" id="GO:0042104">
    <property type="term" value="P:positive regulation of activated T cell proliferation"/>
    <property type="evidence" value="ECO:0007669"/>
    <property type="project" value="Ensembl"/>
</dbReference>
<dbReference type="GO" id="GO:0030890">
    <property type="term" value="P:positive regulation of B cell proliferation"/>
    <property type="evidence" value="ECO:0007669"/>
    <property type="project" value="Ensembl"/>
</dbReference>
<dbReference type="GO" id="GO:0032740">
    <property type="term" value="P:positive regulation of interleukin-17 production"/>
    <property type="evidence" value="ECO:0007669"/>
    <property type="project" value="Ensembl"/>
</dbReference>
<dbReference type="GO" id="GO:0048304">
    <property type="term" value="P:positive regulation of isotype switching to IgG isotypes"/>
    <property type="evidence" value="ECO:0007669"/>
    <property type="project" value="Ensembl"/>
</dbReference>
<dbReference type="GO" id="GO:1900100">
    <property type="term" value="P:positive regulation of plasma cell differentiation"/>
    <property type="evidence" value="ECO:0007669"/>
    <property type="project" value="Ensembl"/>
</dbReference>
<dbReference type="GO" id="GO:0045944">
    <property type="term" value="P:positive regulation of transcription by RNA polymerase II"/>
    <property type="evidence" value="ECO:0007669"/>
    <property type="project" value="Ensembl"/>
</dbReference>
<dbReference type="GO" id="GO:0032729">
    <property type="term" value="P:positive regulation of type II interferon production"/>
    <property type="evidence" value="ECO:0007669"/>
    <property type="project" value="Ensembl"/>
</dbReference>
<dbReference type="GO" id="GO:2000561">
    <property type="term" value="P:regulation of CD4-positive, alpha-beta T cell proliferation"/>
    <property type="evidence" value="ECO:0007669"/>
    <property type="project" value="Ensembl"/>
</dbReference>
<dbReference type="GO" id="GO:0046013">
    <property type="term" value="P:regulation of T cell homeostatic proliferation"/>
    <property type="evidence" value="ECO:0007669"/>
    <property type="project" value="Ensembl"/>
</dbReference>
<dbReference type="GO" id="GO:0006366">
    <property type="term" value="P:transcription by RNA polymerase II"/>
    <property type="evidence" value="ECO:0007669"/>
    <property type="project" value="Ensembl"/>
</dbReference>
<dbReference type="FunFam" id="1.20.1250.10:FF:000025">
    <property type="entry name" value="Interleukin-2"/>
    <property type="match status" value="1"/>
</dbReference>
<dbReference type="Gene3D" id="1.20.1250.10">
    <property type="match status" value="1"/>
</dbReference>
<dbReference type="InterPro" id="IPR009079">
    <property type="entry name" value="4_helix_cytokine-like_core"/>
</dbReference>
<dbReference type="InterPro" id="IPR000779">
    <property type="entry name" value="IL-2"/>
</dbReference>
<dbReference type="InterPro" id="IPR030477">
    <property type="entry name" value="IL-2_CS"/>
</dbReference>
<dbReference type="PANTHER" id="PTHR48487">
    <property type="entry name" value="INTERLEUKIN-2"/>
    <property type="match status" value="1"/>
</dbReference>
<dbReference type="PANTHER" id="PTHR48487:SF1">
    <property type="entry name" value="INTERLEUKIN-2"/>
    <property type="match status" value="1"/>
</dbReference>
<dbReference type="Pfam" id="PF00715">
    <property type="entry name" value="IL2"/>
    <property type="match status" value="1"/>
</dbReference>
<dbReference type="PRINTS" id="PR00265">
    <property type="entry name" value="INTERLEUKIN2"/>
</dbReference>
<dbReference type="SMART" id="SM00189">
    <property type="entry name" value="IL2"/>
    <property type="match status" value="1"/>
</dbReference>
<dbReference type="SUPFAM" id="SSF47266">
    <property type="entry name" value="4-helical cytokines"/>
    <property type="match status" value="1"/>
</dbReference>
<dbReference type="PROSITE" id="PS00424">
    <property type="entry name" value="INTERLEUKIN_2"/>
    <property type="match status" value="1"/>
</dbReference>
<sequence length="154" mass="17654">MYKIQLLSCIALTLILVTNSAPASSSTKETQQQLEQLLLDLRLLLNGVNNPENPKLSRMLTFKFYVPKKATELTHLQCLVEELKPLEEVLYLAQSKNFHLNHIKELMSNINVTVLKLKGSETRFTCNYDDETATIVEFLNKWITFCQSIFSTLT</sequence>
<evidence type="ECO:0000250" key="1"/>
<evidence type="ECO:0000250" key="2">
    <source>
        <dbReference type="UniProtKB" id="P60568"/>
    </source>
</evidence>
<evidence type="ECO:0000255" key="3"/>
<evidence type="ECO:0000305" key="4"/>
<organism>
    <name type="scientific">Felis catus</name>
    <name type="common">Cat</name>
    <name type="synonym">Felis silvestris catus</name>
    <dbReference type="NCBI Taxonomy" id="9685"/>
    <lineage>
        <taxon>Eukaryota</taxon>
        <taxon>Metazoa</taxon>
        <taxon>Chordata</taxon>
        <taxon>Craniata</taxon>
        <taxon>Vertebrata</taxon>
        <taxon>Euteleostomi</taxon>
        <taxon>Mammalia</taxon>
        <taxon>Eutheria</taxon>
        <taxon>Laurasiatheria</taxon>
        <taxon>Carnivora</taxon>
        <taxon>Feliformia</taxon>
        <taxon>Felidae</taxon>
        <taxon>Felinae</taxon>
        <taxon>Felis</taxon>
    </lineage>
</organism>
<reference key="1">
    <citation type="journal article" date="1993" name="Biochem. Biophys. Res. Commun.">
        <title>Sequence and functional characterization of feline interleukin 2.</title>
        <authorList>
            <person name="Cozzi P.J."/>
            <person name="Padrid P.A."/>
            <person name="Takeda J."/>
            <person name="Alegre M.-A."/>
            <person name="Yuhki N."/>
            <person name="Leff A.R."/>
        </authorList>
    </citation>
    <scope>NUCLEOTIDE SEQUENCE [MRNA]</scope>
</reference>
<reference key="2">
    <citation type="submission" date="1994-11" db="EMBL/GenBank/DDBJ databases">
        <authorList>
            <person name="Litman R."/>
            <person name="Gibbs C."/>
            <person name="Good R.A."/>
            <person name="Day N.K."/>
        </authorList>
    </citation>
    <scope>NUCLEOTIDE SEQUENCE [MRNA]</scope>
</reference>
<proteinExistence type="evidence at transcript level"/>